<evidence type="ECO:0000305" key="1"/>
<reference key="1">
    <citation type="journal article" date="1993" name="Nature">
        <title>Potential virulence determinants in terminal regions of variola smallpox virus genome.</title>
        <authorList>
            <person name="Massung R.F."/>
            <person name="Esposito J.J."/>
            <person name="Liu L.I."/>
            <person name="Qi J."/>
            <person name="Utterback T.R."/>
            <person name="Knight J.C."/>
            <person name="Aubin L."/>
            <person name="Yuran T.E."/>
            <person name="Parsons J.M."/>
            <person name="Loparev V.N."/>
            <person name="Selivanov N.A."/>
            <person name="Cavallaro K.F."/>
            <person name="Kerlavage A.R."/>
            <person name="Mahy B.W.J."/>
            <person name="Venter J.C."/>
        </authorList>
    </citation>
    <scope>NUCLEOTIDE SEQUENCE [GENOMIC DNA]</scope>
    <source>
        <strain>Bangladesh-1975</strain>
    </source>
</reference>
<organism>
    <name type="scientific">Variola virus</name>
    <dbReference type="NCBI Taxonomy" id="10255"/>
    <lineage>
        <taxon>Viruses</taxon>
        <taxon>Varidnaviria</taxon>
        <taxon>Bamfordvirae</taxon>
        <taxon>Nucleocytoviricota</taxon>
        <taxon>Pokkesviricetes</taxon>
        <taxon>Chitovirales</taxon>
        <taxon>Poxviridae</taxon>
        <taxon>Chordopoxvirinae</taxon>
        <taxon>Orthopoxvirus</taxon>
    </lineage>
</organism>
<sequence>MGNKNIKPSKENRLSILYKDRMDSFKRGSWATSSFREKSHATIQRFLSLRREHVKVDHPDKFLELKREIYAIIQKSSSIDVDKRTKLMSNIKTMMINPFMIEGLMTSLESLDPDNKMSYSSVMILGEFDIINISDNKAAFEFINSLLKSLLLLNTSQLKLLEYSISNDLLYTHINALEYIIKNTFNVPERQLILRCQYLTPIFSDLLKYAGLTIKSNILMWNKKFIKPVSDLYTSMQLLHCVTV</sequence>
<name>A47_VARV</name>
<gene>
    <name type="ORF">A47L</name>
    <name type="ORF">J1L</name>
</gene>
<dbReference type="EMBL" id="L22579">
    <property type="protein sequence ID" value="AAA60902.1"/>
    <property type="molecule type" value="Genomic_DNA"/>
</dbReference>
<dbReference type="PIR" id="I36853">
    <property type="entry name" value="I36853"/>
</dbReference>
<dbReference type="RefSeq" id="NP_042203.1">
    <property type="nucleotide sequence ID" value="NC_001611.1"/>
</dbReference>
<dbReference type="SMR" id="P0DOP0"/>
<dbReference type="GeneID" id="1486447"/>
<dbReference type="KEGG" id="vg:1486447"/>
<dbReference type="Proteomes" id="UP000119805">
    <property type="component" value="Segment"/>
</dbReference>
<dbReference type="InterPro" id="IPR009402">
    <property type="entry name" value="Orthopox_A47"/>
</dbReference>
<dbReference type="Pfam" id="PF06334">
    <property type="entry name" value="Orthopox_A47"/>
    <property type="match status" value="1"/>
</dbReference>
<proteinExistence type="inferred from homology"/>
<accession>P0DOP0</accession>
<accession>P33856</accession>
<protein>
    <recommendedName>
        <fullName>Protein A47</fullName>
    </recommendedName>
</protein>
<comment type="similarity">
    <text evidence="1">Belongs to the orthopoxvirus A47 protein family.</text>
</comment>
<organismHost>
    <name type="scientific">Homo sapiens</name>
    <name type="common">Human</name>
    <dbReference type="NCBI Taxonomy" id="9606"/>
</organismHost>
<feature type="chain" id="PRO_0000448167" description="Protein A47">
    <location>
        <begin position="1"/>
        <end position="244"/>
    </location>
</feature>